<proteinExistence type="evidence at transcript level"/>
<dbReference type="EMBL" id="BT021026">
    <property type="protein sequence ID" value="AAX09043.1"/>
    <property type="molecule type" value="mRNA"/>
</dbReference>
<dbReference type="EMBL" id="BC105547">
    <property type="protein sequence ID" value="AAI05548.2"/>
    <property type="molecule type" value="mRNA"/>
</dbReference>
<dbReference type="RefSeq" id="NP_001014904.1">
    <property type="nucleotide sequence ID" value="NM_001014904.1"/>
</dbReference>
<dbReference type="SMR" id="Q5E994"/>
<dbReference type="FunCoup" id="Q5E994">
    <property type="interactions" value="2839"/>
</dbReference>
<dbReference type="GeneID" id="512033"/>
<dbReference type="KEGG" id="bta:512033"/>
<dbReference type="CTD" id="57132"/>
<dbReference type="InParanoid" id="Q5E994"/>
<dbReference type="OrthoDB" id="5817230at2759"/>
<dbReference type="Proteomes" id="UP000009136">
    <property type="component" value="Unplaced"/>
</dbReference>
<dbReference type="GO" id="GO:1904930">
    <property type="term" value="C:amphisome membrane"/>
    <property type="evidence" value="ECO:0007669"/>
    <property type="project" value="Ensembl"/>
</dbReference>
<dbReference type="GO" id="GO:0005829">
    <property type="term" value="C:cytosol"/>
    <property type="evidence" value="ECO:0007669"/>
    <property type="project" value="UniProtKB-SubCell"/>
</dbReference>
<dbReference type="GO" id="GO:0000815">
    <property type="term" value="C:ESCRT III complex"/>
    <property type="evidence" value="ECO:0000318"/>
    <property type="project" value="GO_Central"/>
</dbReference>
<dbReference type="GO" id="GO:0000776">
    <property type="term" value="C:kinetochore"/>
    <property type="evidence" value="ECO:0007669"/>
    <property type="project" value="Ensembl"/>
</dbReference>
<dbReference type="GO" id="GO:0005828">
    <property type="term" value="C:kinetochore microtubule"/>
    <property type="evidence" value="ECO:0007669"/>
    <property type="project" value="Ensembl"/>
</dbReference>
<dbReference type="GO" id="GO:0005765">
    <property type="term" value="C:lysosomal membrane"/>
    <property type="evidence" value="ECO:0007669"/>
    <property type="project" value="Ensembl"/>
</dbReference>
<dbReference type="GO" id="GO:0030117">
    <property type="term" value="C:membrane coat"/>
    <property type="evidence" value="ECO:0007669"/>
    <property type="project" value="Ensembl"/>
</dbReference>
<dbReference type="GO" id="GO:0030496">
    <property type="term" value="C:midbody"/>
    <property type="evidence" value="ECO:0007669"/>
    <property type="project" value="Ensembl"/>
</dbReference>
<dbReference type="GO" id="GO:0005771">
    <property type="term" value="C:multivesicular body"/>
    <property type="evidence" value="ECO:0000318"/>
    <property type="project" value="GO_Central"/>
</dbReference>
<dbReference type="GO" id="GO:0032585">
    <property type="term" value="C:multivesicular body membrane"/>
    <property type="evidence" value="ECO:0007669"/>
    <property type="project" value="Ensembl"/>
</dbReference>
<dbReference type="GO" id="GO:0005643">
    <property type="term" value="C:nuclear pore"/>
    <property type="evidence" value="ECO:0007669"/>
    <property type="project" value="Ensembl"/>
</dbReference>
<dbReference type="GO" id="GO:0005654">
    <property type="term" value="C:nucleoplasm"/>
    <property type="evidence" value="ECO:0007669"/>
    <property type="project" value="Ensembl"/>
</dbReference>
<dbReference type="GO" id="GO:0005886">
    <property type="term" value="C:plasma membrane"/>
    <property type="evidence" value="ECO:0007669"/>
    <property type="project" value="Ensembl"/>
</dbReference>
<dbReference type="GO" id="GO:0042802">
    <property type="term" value="F:identical protein binding"/>
    <property type="evidence" value="ECO:0007669"/>
    <property type="project" value="Ensembl"/>
</dbReference>
<dbReference type="GO" id="GO:0090541">
    <property type="term" value="F:MIT domain binding"/>
    <property type="evidence" value="ECO:0007669"/>
    <property type="project" value="Ensembl"/>
</dbReference>
<dbReference type="GO" id="GO:0097352">
    <property type="term" value="P:autophagosome maturation"/>
    <property type="evidence" value="ECO:0007669"/>
    <property type="project" value="Ensembl"/>
</dbReference>
<dbReference type="GO" id="GO:0032509">
    <property type="term" value="P:endosome transport via multivesicular body sorting pathway"/>
    <property type="evidence" value="ECO:0000318"/>
    <property type="project" value="GO_Central"/>
</dbReference>
<dbReference type="GO" id="GO:1902774">
    <property type="term" value="P:late endosome to lysosome transport"/>
    <property type="evidence" value="ECO:0007669"/>
    <property type="project" value="Ensembl"/>
</dbReference>
<dbReference type="GO" id="GO:0045324">
    <property type="term" value="P:late endosome to vacuole transport"/>
    <property type="evidence" value="ECO:0000318"/>
    <property type="project" value="GO_Central"/>
</dbReference>
<dbReference type="GO" id="GO:0061952">
    <property type="term" value="P:midbody abscission"/>
    <property type="evidence" value="ECO:0007669"/>
    <property type="project" value="Ensembl"/>
</dbReference>
<dbReference type="GO" id="GO:0007080">
    <property type="term" value="P:mitotic metaphase chromosome alignment"/>
    <property type="evidence" value="ECO:0007669"/>
    <property type="project" value="Ensembl"/>
</dbReference>
<dbReference type="GO" id="GO:0031468">
    <property type="term" value="P:nuclear membrane reassembly"/>
    <property type="evidence" value="ECO:0007669"/>
    <property type="project" value="Ensembl"/>
</dbReference>
<dbReference type="GO" id="GO:0001778">
    <property type="term" value="P:plasma membrane repair"/>
    <property type="evidence" value="ECO:0007669"/>
    <property type="project" value="Ensembl"/>
</dbReference>
<dbReference type="GO" id="GO:0015031">
    <property type="term" value="P:protein transport"/>
    <property type="evidence" value="ECO:0000318"/>
    <property type="project" value="GO_Central"/>
</dbReference>
<dbReference type="GO" id="GO:0010824">
    <property type="term" value="P:regulation of centrosome duplication"/>
    <property type="evidence" value="ECO:0007669"/>
    <property type="project" value="Ensembl"/>
</dbReference>
<dbReference type="GO" id="GO:1901673">
    <property type="term" value="P:regulation of mitotic spindle assembly"/>
    <property type="evidence" value="ECO:0007669"/>
    <property type="project" value="Ensembl"/>
</dbReference>
<dbReference type="GO" id="GO:0043162">
    <property type="term" value="P:ubiquitin-dependent protein catabolic process via the multivesicular body sorting pathway"/>
    <property type="evidence" value="ECO:0007669"/>
    <property type="project" value="Ensembl"/>
</dbReference>
<dbReference type="GO" id="GO:0046761">
    <property type="term" value="P:viral budding from plasma membrane"/>
    <property type="evidence" value="ECO:0007669"/>
    <property type="project" value="Ensembl"/>
</dbReference>
<dbReference type="GO" id="GO:0039702">
    <property type="term" value="P:viral budding via host ESCRT complex"/>
    <property type="evidence" value="ECO:0007669"/>
    <property type="project" value="Ensembl"/>
</dbReference>
<dbReference type="Gene3D" id="6.10.140.1230">
    <property type="match status" value="1"/>
</dbReference>
<dbReference type="InterPro" id="IPR005024">
    <property type="entry name" value="Snf7_fam"/>
</dbReference>
<dbReference type="PANTHER" id="PTHR10476">
    <property type="entry name" value="CHARGED MULTIVESICULAR BODY PROTEIN"/>
    <property type="match status" value="1"/>
</dbReference>
<dbReference type="Pfam" id="PF03357">
    <property type="entry name" value="Snf7"/>
    <property type="match status" value="1"/>
</dbReference>
<gene>
    <name type="primary">CHMP1B</name>
</gene>
<reference key="1">
    <citation type="journal article" date="2005" name="BMC Genomics">
        <title>Characterization of 954 bovine full-CDS cDNA sequences.</title>
        <authorList>
            <person name="Harhay G.P."/>
            <person name="Sonstegard T.S."/>
            <person name="Keele J.W."/>
            <person name="Heaton M.P."/>
            <person name="Clawson M.L."/>
            <person name="Snelling W.M."/>
            <person name="Wiedmann R.T."/>
            <person name="Van Tassell C.P."/>
            <person name="Smith T.P.L."/>
        </authorList>
    </citation>
    <scope>NUCLEOTIDE SEQUENCE [LARGE SCALE MRNA]</scope>
</reference>
<reference key="2">
    <citation type="submission" date="2005-09" db="EMBL/GenBank/DDBJ databases">
        <authorList>
            <consortium name="NIH - Mammalian Gene Collection (MGC) project"/>
        </authorList>
    </citation>
    <scope>NUCLEOTIDE SEQUENCE [LARGE SCALE MRNA]</scope>
    <source>
        <strain>Hereford</strain>
        <tissue>Ascending colon</tissue>
    </source>
</reference>
<accession>Q5E994</accession>
<accession>Q2KJ31</accession>
<organism>
    <name type="scientific">Bos taurus</name>
    <name type="common">Bovine</name>
    <dbReference type="NCBI Taxonomy" id="9913"/>
    <lineage>
        <taxon>Eukaryota</taxon>
        <taxon>Metazoa</taxon>
        <taxon>Chordata</taxon>
        <taxon>Craniata</taxon>
        <taxon>Vertebrata</taxon>
        <taxon>Euteleostomi</taxon>
        <taxon>Mammalia</taxon>
        <taxon>Eutheria</taxon>
        <taxon>Laurasiatheria</taxon>
        <taxon>Artiodactyla</taxon>
        <taxon>Ruminantia</taxon>
        <taxon>Pecora</taxon>
        <taxon>Bovidae</taxon>
        <taxon>Bovinae</taxon>
        <taxon>Bos</taxon>
    </lineage>
</organism>
<feature type="chain" id="PRO_0000211453" description="Charged multivesicular body protein 1b">
    <location>
        <begin position="1"/>
        <end position="199"/>
    </location>
</feature>
<feature type="region of interest" description="Interaction with IST1" evidence="1">
    <location>
        <begin position="132"/>
        <end position="156"/>
    </location>
</feature>
<feature type="region of interest" description="Disordered" evidence="3">
    <location>
        <begin position="167"/>
        <end position="199"/>
    </location>
</feature>
<feature type="region of interest" description="Interaction with SPAST" evidence="1">
    <location>
        <begin position="174"/>
        <end position="199"/>
    </location>
</feature>
<feature type="region of interest" description="Interaction with VTA1" evidence="1">
    <location>
        <begin position="180"/>
        <end position="199"/>
    </location>
</feature>
<feature type="region of interest" description="Interaction with VPS4A, MITD1 and STAMBP" evidence="1">
    <location>
        <begin position="180"/>
        <end position="196"/>
    </location>
</feature>
<feature type="region of interest" description="Interaction with VPS4B" evidence="1">
    <location>
        <begin position="183"/>
        <end position="199"/>
    </location>
</feature>
<feature type="coiled-coil region" evidence="2">
    <location>
        <begin position="26"/>
        <end position="48"/>
    </location>
</feature>
<feature type="coiled-coil region" evidence="2">
    <location>
        <begin position="178"/>
        <end position="199"/>
    </location>
</feature>
<feature type="short sequence motif" description="MIT-interacting motif">
    <location>
        <begin position="186"/>
        <end position="196"/>
    </location>
</feature>
<feature type="compositionally biased region" description="Polar residues" evidence="3">
    <location>
        <begin position="170"/>
        <end position="182"/>
    </location>
</feature>
<evidence type="ECO:0000250" key="1"/>
<evidence type="ECO:0000255" key="2"/>
<evidence type="ECO:0000256" key="3">
    <source>
        <dbReference type="SAM" id="MobiDB-lite"/>
    </source>
</evidence>
<evidence type="ECO:0000305" key="4"/>
<protein>
    <recommendedName>
        <fullName>Charged multivesicular body protein 1b</fullName>
    </recommendedName>
    <alternativeName>
        <fullName>Chromatin-modifying protein 1b</fullName>
        <shortName>CHMP1b</shortName>
    </alternativeName>
</protein>
<sequence>MSNMEKHLFNLKFAAKELGRSAKKCDKEEKAEKAKIKKAIQKGNMEVARIHAENAIRQKNQAVNFLRMSARVDAVAARVQTAVTMGKVTKSMAGVVKSMDATLKTMNLEKISALMDKFEHQFETLDVQTQQMEDTMSSTTTLTTPQGQVDMLLQEMADEAGLDLNMELPQGQTGSVGTSVASAEQDELSQRLARLRDQV</sequence>
<name>CHM1B_BOVIN</name>
<comment type="function">
    <text evidence="1">Probable peripherally associated component of the endosomal sorting required for transport complex III (ESCRT-III) which is involved in multivesicular bodies (MVBs) formation and sorting of endosomal cargo proteins into MVBs. MVBs contain intraluminal vesicles (ILVs) that are generated by invagination and scission from the limiting membrane of the endosome and mostly are delivered to lysosomes enabling degradation of membrane proteins, such as stimulated growth factor receptors, lysosomal enzymes and lipids. The MVB pathway appears to require the sequential function of ESCRT-O, -I,-II and -III complexes. ESCRT-III proteins mostly dissociate from the invaginating membrane before the ILV is released. The ESCRT machinery also functions in topologically equivalent membrane fission events, such as the terminal stages of cytokinesis and the budding of enveloped viruses (lentiviruses). ESCRT-III proteins are believed to mediate the necessary vesicle extrusion and/or membrane fission activities, possibly in conjunction with the AAA ATPase VPS4. Involved in cytokinesis. Involved in recruiting VPS4A and/or VPS4B and SPAST to the midbody of dividing cells (By similarity).</text>
</comment>
<comment type="subunit">
    <text evidence="1">Probable peripherally associated component of the endosomal sorting required for transport complex III (ESCRT-III). ESCRT-III components are thought to multimerize to form a flat lattice on the perimeter membrane of the endosome. Several assembly forms of ESCRT-III may exist that interact and act sequentially. Interacts with CHMP1A. Interacts with VTA1; the interaction probably involves the open conformation of CHMP1B. Interacts with CHMP2A. Interacts with VPS4A; the interaction is direct. Interacts with VPS4B; the interaction is direct. Interacts with SPAST (via MIT domain); the interaction is direct. Interacts with IST1. Interacts with MITD1. Interacts with STAMBP (By similarity).</text>
</comment>
<comment type="subcellular location">
    <subcellularLocation>
        <location evidence="1">Cytoplasm</location>
        <location evidence="1">Cytosol</location>
    </subcellularLocation>
    <subcellularLocation>
        <location evidence="1">Endosome</location>
    </subcellularLocation>
    <subcellularLocation>
        <location evidence="1">Late endosome membrane</location>
        <topology evidence="1">Peripheral membrane protein</topology>
    </subcellularLocation>
    <text evidence="1">Localizes to the midbody of dividing cells, colocalizing with CEP55 and CHMP5. Localized at the periphery of the Fleming body (By similarity).</text>
</comment>
<comment type="similarity">
    <text evidence="4">Belongs to the SNF7 family.</text>
</comment>
<keyword id="KW-0131">Cell cycle</keyword>
<keyword id="KW-0132">Cell division</keyword>
<keyword id="KW-0175">Coiled coil</keyword>
<keyword id="KW-0963">Cytoplasm</keyword>
<keyword id="KW-0967">Endosome</keyword>
<keyword id="KW-0472">Membrane</keyword>
<keyword id="KW-0653">Protein transport</keyword>
<keyword id="KW-1185">Reference proteome</keyword>
<keyword id="KW-0813">Transport</keyword>